<evidence type="ECO:0000250" key="1">
    <source>
        <dbReference type="UniProtKB" id="Q8IUH5"/>
    </source>
</evidence>
<evidence type="ECO:0000255" key="2"/>
<evidence type="ECO:0000255" key="3">
    <source>
        <dbReference type="PROSITE-ProRule" id="PRU00067"/>
    </source>
</evidence>
<evidence type="ECO:0000269" key="4">
    <source>
    </source>
</evidence>
<evidence type="ECO:0000269" key="5">
    <source>
    </source>
</evidence>
<evidence type="ECO:0000269" key="6">
    <source>
    </source>
</evidence>
<evidence type="ECO:0000269" key="7">
    <source>
    </source>
</evidence>
<evidence type="ECO:0000269" key="8">
    <source>
    </source>
</evidence>
<evidence type="ECO:0000269" key="9">
    <source>
    </source>
</evidence>
<evidence type="ECO:0000269" key="10">
    <source>
    </source>
</evidence>
<evidence type="ECO:0000269" key="11">
    <source>
    </source>
</evidence>
<evidence type="ECO:0000269" key="12">
    <source>
    </source>
</evidence>
<evidence type="ECO:0000269" key="13">
    <source>
    </source>
</evidence>
<evidence type="ECO:0000269" key="14">
    <source>
    </source>
</evidence>
<evidence type="ECO:0000303" key="15">
    <source>
    </source>
</evidence>
<evidence type="ECO:0000303" key="16">
    <source>
    </source>
</evidence>
<evidence type="ECO:0000303" key="17">
    <source>
    </source>
</evidence>
<evidence type="ECO:0000303" key="18">
    <source>
    </source>
</evidence>
<evidence type="ECO:0000303" key="19">
    <source>
    </source>
</evidence>
<evidence type="ECO:0000305" key="20"/>
<evidence type="ECO:0000305" key="21">
    <source>
    </source>
</evidence>
<evidence type="ECO:0000305" key="22">
    <source>
    </source>
</evidence>
<evidence type="ECO:0000305" key="23">
    <source>
    </source>
</evidence>
<evidence type="ECO:0000305" key="24">
    <source>
    </source>
</evidence>
<evidence type="ECO:0000312" key="25">
    <source>
        <dbReference type="EMBL" id="BAC65688.1"/>
    </source>
</evidence>
<evidence type="ECO:0000312" key="26">
    <source>
        <dbReference type="MGI" id="MGI:2445110"/>
    </source>
</evidence>
<gene>
    <name evidence="26" type="primary">Zdhhc17</name>
    <name evidence="15 19" type="synonym">Hip14</name>
    <name evidence="25" type="synonym">Kiaa0946</name>
</gene>
<sequence length="632" mass="72621">MQREEGFNTKMADGPDEYETETGCVPLLHPEEIKPQSHYNHGYGEPLGRKTHIDDYSTWDIVKATQYGIYERCRELVEAGYDVRQPDKENVTLLHWAAINNRIDLVKYYISKGAIVDQLGGDLNSTPLHWATRQGHLSMVVQLMKYGADPSLIDGEGCSCIHLAAQFGHTSIVAYLIAKGQDVDMMDQNGMTPLMWAAYRTHSVDPTRLLLTFNVSVNLGDKYHKNTALHWAVLAGNTTVISLLLEAGGNVDAQNVKGESALDLAKQRKNVWMINHLQEARQAKGYDNPSFLRKLKADKEFRQKVMLGTPFLVIWLVGFIADLDIDSWLIKGLMYGGVWATVQFLSKSFFDHSMHSALPLGIYLATKFWMYVTWFFWFWNDLNFLFIHLPFLANSVALFYNFGKSWKSDPGIIKATEEQKKKTIVELAETGSLDLSIFCSTCLIRKPVRSKHCGVCNRCIAKFDHHCPWVGNCVGAGNHRYFMGYLFFLLFMICWMIYGCVSYWGLHCETTYTKDGFWTYITQIATCSPWMFWMFLNSVFHFLWVAVLLMCQLYQITCLGITTNERMNARRYKHFKVTTTSIESPFNHGCVRNIIDFFEFRCCGLFRPVIVDWTRQYTIEYDQISGSGYQLV</sequence>
<name>ZDH17_MOUSE</name>
<organism>
    <name type="scientific">Mus musculus</name>
    <name type="common">Mouse</name>
    <dbReference type="NCBI Taxonomy" id="10090"/>
    <lineage>
        <taxon>Eukaryota</taxon>
        <taxon>Metazoa</taxon>
        <taxon>Chordata</taxon>
        <taxon>Craniata</taxon>
        <taxon>Vertebrata</taxon>
        <taxon>Euteleostomi</taxon>
        <taxon>Mammalia</taxon>
        <taxon>Eutheria</taxon>
        <taxon>Euarchontoglires</taxon>
        <taxon>Glires</taxon>
        <taxon>Rodentia</taxon>
        <taxon>Myomorpha</taxon>
        <taxon>Muroidea</taxon>
        <taxon>Muridae</taxon>
        <taxon>Murinae</taxon>
        <taxon>Mus</taxon>
        <taxon>Mus</taxon>
    </lineage>
</organism>
<protein>
    <recommendedName>
        <fullName evidence="20">Palmitoyltransferase ZDHHC17</fullName>
        <ecNumber evidence="5 6 10">2.3.1.225</ecNumber>
    </recommendedName>
    <alternativeName>
        <fullName evidence="24">Acyltransferase ZDHHC17</fullName>
        <ecNumber evidence="24">2.3.1.-</ecNumber>
    </alternativeName>
    <alternativeName>
        <fullName evidence="22">DHHC domain-containing cysteine-rich protein 17</fullName>
        <shortName evidence="18">DHHC-17</shortName>
    </alternativeName>
    <alternativeName>
        <fullName evidence="17">Huntingtin-interacting protein 14</fullName>
    </alternativeName>
    <alternativeName>
        <fullName evidence="26">Zinc finger DHHC domain-containing protein 17</fullName>
    </alternativeName>
</protein>
<keyword id="KW-0012">Acyltransferase</keyword>
<keyword id="KW-0025">Alternative splicing</keyword>
<keyword id="KW-0040">ANK repeat</keyword>
<keyword id="KW-1003">Cell membrane</keyword>
<keyword id="KW-0966">Cell projection</keyword>
<keyword id="KW-0968">Cytoplasmic vesicle</keyword>
<keyword id="KW-0333">Golgi apparatus</keyword>
<keyword id="KW-0449">Lipoprotein</keyword>
<keyword id="KW-0472">Membrane</keyword>
<keyword id="KW-0564">Palmitate</keyword>
<keyword id="KW-1185">Reference proteome</keyword>
<keyword id="KW-0677">Repeat</keyword>
<keyword id="KW-0770">Synapse</keyword>
<keyword id="KW-0808">Transferase</keyword>
<keyword id="KW-0812">Transmembrane</keyword>
<keyword id="KW-1133">Transmembrane helix</keyword>
<keyword id="KW-0043">Tumor suppressor</keyword>
<accession>Q80TN5</accession>
<accession>Q8BJ08</accession>
<accession>Q8BYQ2</accession>
<accession>Q8BYQ6</accession>
<proteinExistence type="evidence at protein level"/>
<feature type="chain" id="PRO_0000212901" description="Palmitoyltransferase ZDHHC17">
    <location>
        <begin position="1"/>
        <end position="632"/>
    </location>
</feature>
<feature type="topological domain" description="Cytoplasmic" evidence="2">
    <location>
        <begin position="1"/>
        <end position="304"/>
    </location>
</feature>
<feature type="transmembrane region" description="Helical" evidence="2">
    <location>
        <begin position="305"/>
        <end position="325"/>
    </location>
</feature>
<feature type="transmembrane region" description="Helical" evidence="2">
    <location>
        <begin position="326"/>
        <end position="346"/>
    </location>
</feature>
<feature type="topological domain" description="Cytoplasmic" evidence="2">
    <location>
        <begin position="347"/>
        <end position="357"/>
    </location>
</feature>
<feature type="transmembrane region" description="Helical" evidence="2">
    <location>
        <begin position="358"/>
        <end position="378"/>
    </location>
</feature>
<feature type="topological domain" description="Lumenal" evidence="2">
    <location>
        <begin position="379"/>
        <end position="381"/>
    </location>
</feature>
<feature type="transmembrane region" description="Helical" evidence="2">
    <location>
        <begin position="382"/>
        <end position="402"/>
    </location>
</feature>
<feature type="topological domain" description="Cytoplasmic" evidence="2">
    <location>
        <begin position="403"/>
        <end position="480"/>
    </location>
</feature>
<feature type="transmembrane region" description="Helical" evidence="2">
    <location>
        <begin position="481"/>
        <end position="501"/>
    </location>
</feature>
<feature type="topological domain" description="Lumenal" evidence="2">
    <location>
        <begin position="502"/>
        <end position="529"/>
    </location>
</feature>
<feature type="transmembrane region" description="Helical" evidence="2">
    <location>
        <begin position="530"/>
        <end position="550"/>
    </location>
</feature>
<feature type="topological domain" description="Cytoplasmic" evidence="2">
    <location>
        <begin position="551"/>
        <end position="632"/>
    </location>
</feature>
<feature type="repeat" description="ANK 1" evidence="1">
    <location>
        <begin position="51"/>
        <end position="86"/>
    </location>
</feature>
<feature type="repeat" description="ANK 2" evidence="2">
    <location>
        <begin position="89"/>
        <end position="118"/>
    </location>
</feature>
<feature type="repeat" description="ANK 3" evidence="2">
    <location>
        <begin position="123"/>
        <end position="152"/>
    </location>
</feature>
<feature type="repeat" description="ANK 4" evidence="2">
    <location>
        <begin position="156"/>
        <end position="185"/>
    </location>
</feature>
<feature type="repeat" description="ANK 5" evidence="2">
    <location>
        <begin position="189"/>
        <end position="219"/>
    </location>
</feature>
<feature type="repeat" description="ANK 6" evidence="2">
    <location>
        <begin position="224"/>
        <end position="253"/>
    </location>
</feature>
<feature type="repeat" description="ANK 7" evidence="2">
    <location>
        <begin position="257"/>
        <end position="286"/>
    </location>
</feature>
<feature type="domain" description="DHHC" evidence="3">
    <location>
        <begin position="437"/>
        <end position="487"/>
    </location>
</feature>
<feature type="region of interest" description="Necessary and sufficient for interaction with DNAJC5 and SNAP25" evidence="10">
    <location>
        <begin position="11"/>
        <end position="305"/>
    </location>
</feature>
<feature type="active site" description="S-palmitoyl cysteine intermediate" evidence="1">
    <location>
        <position position="467"/>
    </location>
</feature>
<feature type="splice variant" id="VSP_010026" description="In isoform 2." evidence="16">
    <original>TIVELAE</original>
    <variation>VVMYPAN</variation>
    <location>
        <begin position="423"/>
        <end position="429"/>
    </location>
</feature>
<feature type="splice variant" id="VSP_010027" description="In isoform 2." evidence="16">
    <location>
        <begin position="430"/>
        <end position="632"/>
    </location>
</feature>
<feature type="mutagenesis site" description="Loss of palmitoyltransferase activity toward DNAJC5 and SNAP25." evidence="10">
    <original>H</original>
    <variation>Q</variation>
    <location>
        <position position="465"/>
    </location>
</feature>
<feature type="mutagenesis site" description="No effect on interaction with DNAJC5 and SNAP25." evidence="10">
    <original>C</original>
    <variation>A</variation>
    <location>
        <position position="467"/>
    </location>
</feature>
<feature type="sequence conflict" description="In Ref. 1; BAC32912." evidence="20" ref="1">
    <original>N</original>
    <variation>K</variation>
    <location>
        <position position="288"/>
    </location>
</feature>
<reference key="1">
    <citation type="journal article" date="2003" name="DNA Res.">
        <title>Prediction of the coding sequences of mouse homologues of KIAA gene: II. The complete nucleotide sequences of 400 mouse KIAA-homologous cDNAs identified by screening of terminal sequences of cDNA clones randomly sampled from size-fractionated libraries.</title>
        <authorList>
            <person name="Okazaki N."/>
            <person name="Kikuno R."/>
            <person name="Ohara R."/>
            <person name="Inamoto S."/>
            <person name="Aizawa H."/>
            <person name="Yuasa S."/>
            <person name="Nakajima D."/>
            <person name="Nagase T."/>
            <person name="Ohara O."/>
            <person name="Koga H."/>
        </authorList>
    </citation>
    <scope>NUCLEOTIDE SEQUENCE [LARGE SCALE MRNA] (ISOFORM 2)</scope>
    <source>
        <tissue>Brain</tissue>
    </source>
</reference>
<reference key="2">
    <citation type="journal article" date="2005" name="Science">
        <title>The transcriptional landscape of the mammalian genome.</title>
        <authorList>
            <person name="Carninci P."/>
            <person name="Kasukawa T."/>
            <person name="Katayama S."/>
            <person name="Gough J."/>
            <person name="Frith M.C."/>
            <person name="Maeda N."/>
            <person name="Oyama R."/>
            <person name="Ravasi T."/>
            <person name="Lenhard B."/>
            <person name="Wells C."/>
            <person name="Kodzius R."/>
            <person name="Shimokawa K."/>
            <person name="Bajic V.B."/>
            <person name="Brenner S.E."/>
            <person name="Batalov S."/>
            <person name="Forrest A.R."/>
            <person name="Zavolan M."/>
            <person name="Davis M.J."/>
            <person name="Wilming L.G."/>
            <person name="Aidinis V."/>
            <person name="Allen J.E."/>
            <person name="Ambesi-Impiombato A."/>
            <person name="Apweiler R."/>
            <person name="Aturaliya R.N."/>
            <person name="Bailey T.L."/>
            <person name="Bansal M."/>
            <person name="Baxter L."/>
            <person name="Beisel K.W."/>
            <person name="Bersano T."/>
            <person name="Bono H."/>
            <person name="Chalk A.M."/>
            <person name="Chiu K.P."/>
            <person name="Choudhary V."/>
            <person name="Christoffels A."/>
            <person name="Clutterbuck D.R."/>
            <person name="Crowe M.L."/>
            <person name="Dalla E."/>
            <person name="Dalrymple B.P."/>
            <person name="de Bono B."/>
            <person name="Della Gatta G."/>
            <person name="di Bernardo D."/>
            <person name="Down T."/>
            <person name="Engstrom P."/>
            <person name="Fagiolini M."/>
            <person name="Faulkner G."/>
            <person name="Fletcher C.F."/>
            <person name="Fukushima T."/>
            <person name="Furuno M."/>
            <person name="Futaki S."/>
            <person name="Gariboldi M."/>
            <person name="Georgii-Hemming P."/>
            <person name="Gingeras T.R."/>
            <person name="Gojobori T."/>
            <person name="Green R.E."/>
            <person name="Gustincich S."/>
            <person name="Harbers M."/>
            <person name="Hayashi Y."/>
            <person name="Hensch T.K."/>
            <person name="Hirokawa N."/>
            <person name="Hill D."/>
            <person name="Huminiecki L."/>
            <person name="Iacono M."/>
            <person name="Ikeo K."/>
            <person name="Iwama A."/>
            <person name="Ishikawa T."/>
            <person name="Jakt M."/>
            <person name="Kanapin A."/>
            <person name="Katoh M."/>
            <person name="Kawasawa Y."/>
            <person name="Kelso J."/>
            <person name="Kitamura H."/>
            <person name="Kitano H."/>
            <person name="Kollias G."/>
            <person name="Krishnan S.P."/>
            <person name="Kruger A."/>
            <person name="Kummerfeld S.K."/>
            <person name="Kurochkin I.V."/>
            <person name="Lareau L.F."/>
            <person name="Lazarevic D."/>
            <person name="Lipovich L."/>
            <person name="Liu J."/>
            <person name="Liuni S."/>
            <person name="McWilliam S."/>
            <person name="Madan Babu M."/>
            <person name="Madera M."/>
            <person name="Marchionni L."/>
            <person name="Matsuda H."/>
            <person name="Matsuzawa S."/>
            <person name="Miki H."/>
            <person name="Mignone F."/>
            <person name="Miyake S."/>
            <person name="Morris K."/>
            <person name="Mottagui-Tabar S."/>
            <person name="Mulder N."/>
            <person name="Nakano N."/>
            <person name="Nakauchi H."/>
            <person name="Ng P."/>
            <person name="Nilsson R."/>
            <person name="Nishiguchi S."/>
            <person name="Nishikawa S."/>
            <person name="Nori F."/>
            <person name="Ohara O."/>
            <person name="Okazaki Y."/>
            <person name="Orlando V."/>
            <person name="Pang K.C."/>
            <person name="Pavan W.J."/>
            <person name="Pavesi G."/>
            <person name="Pesole G."/>
            <person name="Petrovsky N."/>
            <person name="Piazza S."/>
            <person name="Reed J."/>
            <person name="Reid J.F."/>
            <person name="Ring B.Z."/>
            <person name="Ringwald M."/>
            <person name="Rost B."/>
            <person name="Ruan Y."/>
            <person name="Salzberg S.L."/>
            <person name="Sandelin A."/>
            <person name="Schneider C."/>
            <person name="Schoenbach C."/>
            <person name="Sekiguchi K."/>
            <person name="Semple C.A."/>
            <person name="Seno S."/>
            <person name="Sessa L."/>
            <person name="Sheng Y."/>
            <person name="Shibata Y."/>
            <person name="Shimada H."/>
            <person name="Shimada K."/>
            <person name="Silva D."/>
            <person name="Sinclair B."/>
            <person name="Sperling S."/>
            <person name="Stupka E."/>
            <person name="Sugiura K."/>
            <person name="Sultana R."/>
            <person name="Takenaka Y."/>
            <person name="Taki K."/>
            <person name="Tammoja K."/>
            <person name="Tan S.L."/>
            <person name="Tang S."/>
            <person name="Taylor M.S."/>
            <person name="Tegner J."/>
            <person name="Teichmann S.A."/>
            <person name="Ueda H.R."/>
            <person name="van Nimwegen E."/>
            <person name="Verardo R."/>
            <person name="Wei C.L."/>
            <person name="Yagi K."/>
            <person name="Yamanishi H."/>
            <person name="Zabarovsky E."/>
            <person name="Zhu S."/>
            <person name="Zimmer A."/>
            <person name="Hide W."/>
            <person name="Bult C."/>
            <person name="Grimmond S.M."/>
            <person name="Teasdale R.D."/>
            <person name="Liu E.T."/>
            <person name="Brusic V."/>
            <person name="Quackenbush J."/>
            <person name="Wahlestedt C."/>
            <person name="Mattick J.S."/>
            <person name="Hume D.A."/>
            <person name="Kai C."/>
            <person name="Sasaki D."/>
            <person name="Tomaru Y."/>
            <person name="Fukuda S."/>
            <person name="Kanamori-Katayama M."/>
            <person name="Suzuki M."/>
            <person name="Aoki J."/>
            <person name="Arakawa T."/>
            <person name="Iida J."/>
            <person name="Imamura K."/>
            <person name="Itoh M."/>
            <person name="Kato T."/>
            <person name="Kawaji H."/>
            <person name="Kawagashira N."/>
            <person name="Kawashima T."/>
            <person name="Kojima M."/>
            <person name="Kondo S."/>
            <person name="Konno H."/>
            <person name="Nakano K."/>
            <person name="Ninomiya N."/>
            <person name="Nishio T."/>
            <person name="Okada M."/>
            <person name="Plessy C."/>
            <person name="Shibata K."/>
            <person name="Shiraki T."/>
            <person name="Suzuki S."/>
            <person name="Tagami M."/>
            <person name="Waki K."/>
            <person name="Watahiki A."/>
            <person name="Okamura-Oho Y."/>
            <person name="Suzuki H."/>
            <person name="Kawai J."/>
            <person name="Hayashizaki Y."/>
        </authorList>
    </citation>
    <scope>NUCLEOTIDE SEQUENCE [LARGE SCALE MRNA] OF 8-632 (ISOFORM 1)</scope>
    <source>
        <strain>C57BL/6J</strain>
        <tissue>Cerebellum</tissue>
        <tissue>Hypothalamus</tissue>
    </source>
</reference>
<reference key="3">
    <citation type="journal article" date="2004" name="Genome Res.">
        <title>The status, quality, and expansion of the NIH full-length cDNA project: the Mammalian Gene Collection (MGC).</title>
        <authorList>
            <consortium name="The MGC Project Team"/>
        </authorList>
    </citation>
    <scope>NUCLEOTIDE SEQUENCE [LARGE SCALE MRNA] OF 9-418 (ISOFORMS 1/2)</scope>
    <source>
        <tissue>Eye</tissue>
    </source>
</reference>
<reference key="4">
    <citation type="journal article" date="2002" name="Hum. Mol. Genet.">
        <title>HIP14, a novel ankyrin domain-containing protein, links huntingtin to intracellular trafficking and endocytosis.</title>
        <authorList>
            <person name="Singaraja R.R."/>
            <person name="Hadano S."/>
            <person name="Metzler M."/>
            <person name="Givan S."/>
            <person name="Wellington C.L."/>
            <person name="Warby S."/>
            <person name="Yanai A."/>
            <person name="Gutekunst C.-A."/>
            <person name="Leavitt B.R."/>
            <person name="Yi H."/>
            <person name="Fichter K."/>
            <person name="Gan L."/>
            <person name="McGutcheon K."/>
            <person name="Chopra V."/>
            <person name="Michel J."/>
            <person name="Hersch S.M."/>
            <person name="Ikeda J.E."/>
            <person name="Hayden M.R."/>
        </authorList>
    </citation>
    <scope>TISSUE SPECIFICITY</scope>
</reference>
<reference key="5">
    <citation type="journal article" date="2004" name="Neuron">
        <title>Identification of PSD-95 palmitoylating enzymes.</title>
        <authorList>
            <person name="Fukata M."/>
            <person name="Fukata Y."/>
            <person name="Adesnik H."/>
            <person name="Nicoll R.A."/>
            <person name="Bredt D.S."/>
        </authorList>
    </citation>
    <scope>FUNCTION</scope>
    <scope>CATALYTIC ACTIVITY</scope>
</reference>
<reference key="6">
    <citation type="journal article" date="2004" name="Oncogene">
        <title>Huntingtin interacting protein 14 is an oncogenic human protein: palmitoyl acyltransferase.</title>
        <authorList>
            <person name="Ducker C.E."/>
            <person name="Stettler E.M."/>
            <person name="French K.J."/>
            <person name="Upson J.J."/>
            <person name="Smith C.D."/>
        </authorList>
    </citation>
    <scope>FUNCTION</scope>
    <scope>CATALYTIC ACTIVITY</scope>
</reference>
<reference key="7">
    <citation type="journal article" date="2008" name="J. Biol. Chem.">
        <title>Palmitoylation and membrane interactions of the neuroprotective chaperone cysteine-string protein.</title>
        <authorList>
            <person name="Greaves J."/>
            <person name="Salaun C."/>
            <person name="Fukata Y."/>
            <person name="Fukata M."/>
            <person name="Chamberlain L.H."/>
        </authorList>
    </citation>
    <scope>FUNCTION</scope>
    <scope>SUBCELLULAR LOCATION</scope>
</reference>
<reference key="8">
    <citation type="journal article" date="2008" name="J. Biol. Chem.">
        <title>Huntingtin-interacting proteins, HIP14 and HIP14L, mediate dual functions, palmitoyl acyltransferase and Mg2+ transport.</title>
        <authorList>
            <person name="Goytain A."/>
            <person name="Hines R.M."/>
            <person name="Quamme G.A."/>
        </authorList>
    </citation>
    <scope>INDUCTION</scope>
</reference>
<reference key="9">
    <citation type="journal article" date="2014" name="Hum. Mol. Genet.">
        <title>The palmitoyl acyltransferase HIP14 shares a high proportion of interactors with huntingtin: implications for a role in the pathogenesis of Huntington's disease.</title>
        <authorList>
            <person name="Butland S.L."/>
            <person name="Sanders S.S."/>
            <person name="Schmidt M.E."/>
            <person name="Riechers S.P."/>
            <person name="Lin D.T."/>
            <person name="Martin D.D."/>
            <person name="Vaid K."/>
            <person name="Graham R.K."/>
            <person name="Singaraja R.R."/>
            <person name="Wanker E.E."/>
            <person name="Conibear E."/>
            <person name="Hayden M.R."/>
        </authorList>
    </citation>
    <scope>INTERACTION WITH SPRED1 AND SPRED3</scope>
</reference>
<reference key="10">
    <citation type="journal article" date="2014" name="Mol. Biol. Cell">
        <title>The Golgi S-acylation machinery comprises zDHHC enzymes with major differences in substrate affinity and S-acylation activity.</title>
        <authorList>
            <person name="Lemonidis K."/>
            <person name="Gorleku O.A."/>
            <person name="Sanchez-Perez M.C."/>
            <person name="Grefen C."/>
            <person name="Chamberlain L.H."/>
        </authorList>
    </citation>
    <scope>FUNCTION</scope>
    <scope>CATALYTIC ACTIVITY</scope>
    <scope>INTERACTION WITH DNAJC5 AND SNAP25</scope>
    <scope>MUTAGENESIS OF HIS-465 AND CYS-467</scope>
    <scope>REGION</scope>
    <scope>SUBCELLULAR LOCATION</scope>
</reference>
<reference key="11">
    <citation type="journal article" date="2015" name="J. Biol. Chem.">
        <title>Identification of a novel sequence motif recognized by the ankyrin repeat domain of zDHHC17/13 S-acyltransferases.</title>
        <authorList>
            <person name="Lemonidis K."/>
            <person name="Sanchez-Perez M.C."/>
            <person name="Chamberlain L.H."/>
        </authorList>
    </citation>
    <scope>INTERACTION WITH CLIP3; DNAJC5; HTT; MAP6; SNAP23 AND SNAP25</scope>
</reference>
<reference key="12">
    <citation type="journal article" date="2015" name="Mol. Cell. Neurosci.">
        <title>ZDHHC17 promotes axon outgrowth by regulating TrkA-tubulin complex formation.</title>
        <authorList>
            <person name="Shi W."/>
            <person name="Wang F."/>
            <person name="Gao M."/>
            <person name="Yang Y."/>
            <person name="Du Z."/>
            <person name="Wang C."/>
            <person name="Yao Y."/>
            <person name="He K."/>
            <person name="Chen X."/>
            <person name="Hao A."/>
        </authorList>
    </citation>
    <scope>FUNCTION</scope>
    <scope>INTERACTION WITH NTRK1</scope>
    <scope>DEVELOPMENTAL STAGE</scope>
</reference>
<reference key="13">
    <citation type="journal article" date="2017" name="Cell Death Differ.">
        <title>Palmitoylation of caspase-6 by HIP14 regulates its activation.</title>
        <authorList>
            <person name="Skotte N.H."/>
            <person name="Sanders S.S."/>
            <person name="Singaraja R.R."/>
            <person name="Ehrnhoefer D.E."/>
            <person name="Vaid K."/>
            <person name="Qiu X."/>
            <person name="Kannan S."/>
            <person name="Verma C."/>
            <person name="Hayden M.R."/>
        </authorList>
    </citation>
    <scope>FUNCTION</scope>
</reference>
<reference key="14">
    <citation type="journal article" date="2017" name="J. Biol. Chem.">
        <title>Peptide array based screening reveals a large number of proteins interacting with the ankyrin repeat domain of the zDHHC17 S-acyltransferase.</title>
        <authorList>
            <person name="Lemonidis K."/>
            <person name="MacLeod R."/>
            <person name="Baillie G.S."/>
            <person name="Chamberlain L.H."/>
        </authorList>
    </citation>
    <scope>INTERACTION WITH SPRED2</scope>
</reference>
<reference key="15">
    <citation type="journal article" date="2017" name="Proc. Natl. Acad. Sci. U.S.A.">
        <title>Molecular basis of fatty acid selectivity in the zDHHC family of S-acyltransferases revealed by click chemistry.</title>
        <authorList>
            <person name="Greaves J."/>
            <person name="Munro K.R."/>
            <person name="Davidson S.C."/>
            <person name="Riviere M."/>
            <person name="Wojno J."/>
            <person name="Smith T.K."/>
            <person name="Tomkinson N.C."/>
            <person name="Chamberlain L.H."/>
        </authorList>
    </citation>
    <scope>FUNCTION</scope>
    <scope>CATALYTIC ACTIVITY</scope>
    <scope>SUBSTRATE SPECIFICITY</scope>
</reference>
<dbReference type="EC" id="2.3.1.225" evidence="5 6 10"/>
<dbReference type="EC" id="2.3.1.-" evidence="24"/>
<dbReference type="EMBL" id="AK122406">
    <property type="protein sequence ID" value="BAC65688.1"/>
    <property type="status" value="ALT_INIT"/>
    <property type="molecule type" value="mRNA"/>
</dbReference>
<dbReference type="EMBL" id="AK038670">
    <property type="protein sequence ID" value="BAC30090.2"/>
    <property type="status" value="ALT_INIT"/>
    <property type="molecule type" value="mRNA"/>
</dbReference>
<dbReference type="EMBL" id="AK038681">
    <property type="protein sequence ID" value="BAC30097.2"/>
    <property type="status" value="ALT_INIT"/>
    <property type="molecule type" value="mRNA"/>
</dbReference>
<dbReference type="EMBL" id="AK046891">
    <property type="protein sequence ID" value="BAC32912.1"/>
    <property type="status" value="ALT_INIT"/>
    <property type="molecule type" value="mRNA"/>
</dbReference>
<dbReference type="EMBL" id="BC058772">
    <property type="protein sequence ID" value="AAH58772.1"/>
    <property type="status" value="ALT_SEQ"/>
    <property type="molecule type" value="mRNA"/>
</dbReference>
<dbReference type="CCDS" id="CCDS56748.1">
    <molecule id="Q80TN5-1"/>
</dbReference>
<dbReference type="RefSeq" id="NP_766142.2">
    <molecule id="Q80TN5-1"/>
    <property type="nucleotide sequence ID" value="NM_172554.2"/>
</dbReference>
<dbReference type="SMR" id="Q80TN5"/>
<dbReference type="BioGRID" id="235798">
    <property type="interactions" value="3"/>
</dbReference>
<dbReference type="FunCoup" id="Q80TN5">
    <property type="interactions" value="3949"/>
</dbReference>
<dbReference type="STRING" id="10090.ENSMUSP00000043279"/>
<dbReference type="GlyGen" id="Q80TN5">
    <property type="glycosylation" value="1 site, 1 N-linked glycan (1 site)"/>
</dbReference>
<dbReference type="iPTMnet" id="Q80TN5"/>
<dbReference type="PhosphoSitePlus" id="Q80TN5"/>
<dbReference type="SwissPalm" id="Q80TN5"/>
<dbReference type="PaxDb" id="10090-ENSMUSP00000043279"/>
<dbReference type="PeptideAtlas" id="Q80TN5"/>
<dbReference type="ProteomicsDB" id="275138">
    <molecule id="Q80TN5-1"/>
</dbReference>
<dbReference type="ProteomicsDB" id="275139">
    <molecule id="Q80TN5-2"/>
</dbReference>
<dbReference type="Pumba" id="Q80TN5"/>
<dbReference type="Antibodypedia" id="8807">
    <property type="antibodies" value="195 antibodies from 34 providers"/>
</dbReference>
<dbReference type="DNASU" id="320150"/>
<dbReference type="Ensembl" id="ENSMUST00000041723.15">
    <molecule id="Q80TN5-1"/>
    <property type="protein sequence ID" value="ENSMUSP00000043279.8"/>
    <property type="gene ID" value="ENSMUSG00000035798.15"/>
</dbReference>
<dbReference type="GeneID" id="320150"/>
<dbReference type="KEGG" id="mmu:320150"/>
<dbReference type="UCSC" id="uc007gzw.2">
    <molecule id="Q80TN5-2"/>
    <property type="organism name" value="mouse"/>
</dbReference>
<dbReference type="UCSC" id="uc033fsq.1">
    <molecule id="Q80TN5-1"/>
    <property type="organism name" value="mouse"/>
</dbReference>
<dbReference type="AGR" id="MGI:2445110"/>
<dbReference type="CTD" id="23390"/>
<dbReference type="MGI" id="MGI:2445110">
    <property type="gene designation" value="Zdhhc17"/>
</dbReference>
<dbReference type="VEuPathDB" id="HostDB:ENSMUSG00000035798"/>
<dbReference type="eggNOG" id="KOG0509">
    <property type="taxonomic scope" value="Eukaryota"/>
</dbReference>
<dbReference type="GeneTree" id="ENSGT00530000063074"/>
<dbReference type="HOGENOM" id="CLU_012510_3_1_1"/>
<dbReference type="InParanoid" id="Q80TN5"/>
<dbReference type="OMA" id="FWVGFRY"/>
<dbReference type="OrthoDB" id="6781668at2759"/>
<dbReference type="PhylomeDB" id="Q80TN5"/>
<dbReference type="TreeFam" id="TF317342"/>
<dbReference type="BioGRID-ORCS" id="320150">
    <property type="hits" value="2 hits in 82 CRISPR screens"/>
</dbReference>
<dbReference type="ChiTaRS" id="Zdhhc17">
    <property type="organism name" value="mouse"/>
</dbReference>
<dbReference type="PRO" id="PR:Q80TN5"/>
<dbReference type="Proteomes" id="UP000000589">
    <property type="component" value="Chromosome 10"/>
</dbReference>
<dbReference type="RNAct" id="Q80TN5">
    <property type="molecule type" value="protein"/>
</dbReference>
<dbReference type="Bgee" id="ENSMUSG00000035798">
    <property type="expression patterns" value="Expressed in retinal neural layer and 226 other cell types or tissues"/>
</dbReference>
<dbReference type="ExpressionAtlas" id="Q80TN5">
    <property type="expression patterns" value="baseline and differential"/>
</dbReference>
<dbReference type="GO" id="GO:0042995">
    <property type="term" value="C:cell projection"/>
    <property type="evidence" value="ECO:0007669"/>
    <property type="project" value="UniProtKB-KW"/>
</dbReference>
<dbReference type="GO" id="GO:0098978">
    <property type="term" value="C:glutamatergic synapse"/>
    <property type="evidence" value="ECO:0000314"/>
    <property type="project" value="SynGO"/>
</dbReference>
<dbReference type="GO" id="GO:0005794">
    <property type="term" value="C:Golgi apparatus"/>
    <property type="evidence" value="ECO:0000314"/>
    <property type="project" value="UniProtKB"/>
</dbReference>
<dbReference type="GO" id="GO:0000139">
    <property type="term" value="C:Golgi membrane"/>
    <property type="evidence" value="ECO:0000250"/>
    <property type="project" value="UniProtKB"/>
</dbReference>
<dbReference type="GO" id="GO:0030660">
    <property type="term" value="C:Golgi-associated vesicle membrane"/>
    <property type="evidence" value="ECO:0000250"/>
    <property type="project" value="UniProtKB"/>
</dbReference>
<dbReference type="GO" id="GO:0140240">
    <property type="term" value="C:perforant pathway to dendrate granule cell synapse"/>
    <property type="evidence" value="ECO:0000314"/>
    <property type="project" value="SynGO"/>
</dbReference>
<dbReference type="GO" id="GO:0150051">
    <property type="term" value="C:postsynaptic Golgi apparatus"/>
    <property type="evidence" value="ECO:0000314"/>
    <property type="project" value="SynGO"/>
</dbReference>
<dbReference type="GO" id="GO:0042734">
    <property type="term" value="C:presynaptic membrane"/>
    <property type="evidence" value="ECO:0007669"/>
    <property type="project" value="UniProtKB-SubCell"/>
</dbReference>
<dbReference type="GO" id="GO:0042802">
    <property type="term" value="F:identical protein binding"/>
    <property type="evidence" value="ECO:0007669"/>
    <property type="project" value="Ensembl"/>
</dbReference>
<dbReference type="GO" id="GO:0016409">
    <property type="term" value="F:palmitoyltransferase activity"/>
    <property type="evidence" value="ECO:0000314"/>
    <property type="project" value="MGI"/>
</dbReference>
<dbReference type="GO" id="GO:0019705">
    <property type="term" value="F:protein-cysteine S-myristoyltransferase activity"/>
    <property type="evidence" value="ECO:0000305"/>
    <property type="project" value="UniProtKB"/>
</dbReference>
<dbReference type="GO" id="GO:0019706">
    <property type="term" value="F:protein-cysteine S-palmitoyltransferase activity"/>
    <property type="evidence" value="ECO:0000250"/>
    <property type="project" value="UniProtKB"/>
</dbReference>
<dbReference type="GO" id="GO:0140439">
    <property type="term" value="F:protein-cysteine S-stearoyltransferase activity"/>
    <property type="evidence" value="ECO:0000305"/>
    <property type="project" value="UniProtKB"/>
</dbReference>
<dbReference type="GO" id="GO:0005102">
    <property type="term" value="F:signaling receptor binding"/>
    <property type="evidence" value="ECO:0000353"/>
    <property type="project" value="UniProtKB"/>
</dbReference>
<dbReference type="GO" id="GO:0007409">
    <property type="term" value="P:axonogenesis"/>
    <property type="evidence" value="ECO:0000315"/>
    <property type="project" value="UniProtKB"/>
</dbReference>
<dbReference type="GO" id="GO:0042953">
    <property type="term" value="P:lipoprotein transport"/>
    <property type="evidence" value="ECO:0007669"/>
    <property type="project" value="Ensembl"/>
</dbReference>
<dbReference type="GO" id="GO:0018230">
    <property type="term" value="P:peptidyl-L-cysteine S-palmitoylation"/>
    <property type="evidence" value="ECO:0000314"/>
    <property type="project" value="UniProtKB"/>
</dbReference>
<dbReference type="GO" id="GO:0018345">
    <property type="term" value="P:protein palmitoylation"/>
    <property type="evidence" value="ECO:0000314"/>
    <property type="project" value="UniProtKB"/>
</dbReference>
<dbReference type="GO" id="GO:0070372">
    <property type="term" value="P:regulation of ERK1 and ERK2 cascade"/>
    <property type="evidence" value="ECO:0000315"/>
    <property type="project" value="UniProtKB"/>
</dbReference>
<dbReference type="GO" id="GO:0098987">
    <property type="term" value="P:regulation of modification of synapse structure, modulating synaptic transmission"/>
    <property type="evidence" value="ECO:0000314"/>
    <property type="project" value="SynGO"/>
</dbReference>
<dbReference type="GO" id="GO:0051386">
    <property type="term" value="P:regulation of neurotrophin TRK receptor signaling pathway"/>
    <property type="evidence" value="ECO:0000315"/>
    <property type="project" value="UniProtKB"/>
</dbReference>
<dbReference type="GO" id="GO:0043067">
    <property type="term" value="P:regulation of programmed cell death"/>
    <property type="evidence" value="ECO:0007669"/>
    <property type="project" value="Ensembl"/>
</dbReference>
<dbReference type="FunFam" id="1.25.40.20:FF:000035">
    <property type="entry name" value="Palmitoyltransferase"/>
    <property type="match status" value="1"/>
</dbReference>
<dbReference type="Gene3D" id="1.25.40.20">
    <property type="entry name" value="Ankyrin repeat-containing domain"/>
    <property type="match status" value="1"/>
</dbReference>
<dbReference type="InterPro" id="IPR002110">
    <property type="entry name" value="Ankyrin_rpt"/>
</dbReference>
<dbReference type="InterPro" id="IPR036770">
    <property type="entry name" value="Ankyrin_rpt-contain_sf"/>
</dbReference>
<dbReference type="InterPro" id="IPR001594">
    <property type="entry name" value="Palmitoyltrfase_DHHC"/>
</dbReference>
<dbReference type="PANTHER" id="PTHR24161">
    <property type="entry name" value="ANK_REP_REGION DOMAIN-CONTAINING PROTEIN-RELATED"/>
    <property type="match status" value="1"/>
</dbReference>
<dbReference type="PANTHER" id="PTHR24161:SF18">
    <property type="entry name" value="PALMITOYLTRANSFERASE ZDHHC17"/>
    <property type="match status" value="1"/>
</dbReference>
<dbReference type="Pfam" id="PF12796">
    <property type="entry name" value="Ank_2"/>
    <property type="match status" value="2"/>
</dbReference>
<dbReference type="Pfam" id="PF01529">
    <property type="entry name" value="DHHC"/>
    <property type="match status" value="1"/>
</dbReference>
<dbReference type="PRINTS" id="PR01415">
    <property type="entry name" value="ANKYRIN"/>
</dbReference>
<dbReference type="SMART" id="SM00248">
    <property type="entry name" value="ANK"/>
    <property type="match status" value="5"/>
</dbReference>
<dbReference type="SUPFAM" id="SSF48403">
    <property type="entry name" value="Ankyrin repeat"/>
    <property type="match status" value="1"/>
</dbReference>
<dbReference type="PROSITE" id="PS50297">
    <property type="entry name" value="ANK_REP_REGION"/>
    <property type="match status" value="1"/>
</dbReference>
<dbReference type="PROSITE" id="PS50088">
    <property type="entry name" value="ANK_REPEAT"/>
    <property type="match status" value="5"/>
</dbReference>
<dbReference type="PROSITE" id="PS50216">
    <property type="entry name" value="DHHC"/>
    <property type="match status" value="1"/>
</dbReference>
<comment type="function">
    <text evidence="1 7 12 13 24">Palmitoyltransferase that catalyzes the addition of palmitate onto various protein substrates and is involved in a variety of cellular processes (PubMed:15489887, PubMed:15603741, PubMed:25253725, PubMed:27911442). Has no stringent fatty acid selectivity and in addition to palmitate can also transfer onto target proteins myristate from tetradecanoyl-CoA and stearate from octadecanoyl-CoA (PubMed:28167757). Palmitoyltransferase specific for a subset of neuronal proteins, including SNAP25, DLG4/PSD95, GAD2, SYT1 and HTT (PubMed:15489887, PubMed:15603741, PubMed:25253725). Also palmitoylates neuronal protein GPM6A as well as SPRED1 and SPRED3 (By similarity). Could also play a role in axonogenesis through the regulation of NTRK1 and the downstream ERK1/ERK2 signaling cascade (PubMed:26232532). May be involved in the sorting or targeting of critical proteins involved in the initiating events of endocytosis at the plasma membrane (By similarity). May play a role in Mg(2+) transport (By similarity). Could also palmitoylate DNAJC5 and regulate its localization to the Golgi membrane (PubMed:18596047). Palmitoylates CASP6, thereby preventing its dimerization and subsequent activation (PubMed:27911442).</text>
</comment>
<comment type="catalytic activity">
    <reaction evidence="5 6 10">
        <text>L-cysteinyl-[protein] + hexadecanoyl-CoA = S-hexadecanoyl-L-cysteinyl-[protein] + CoA</text>
        <dbReference type="Rhea" id="RHEA:36683"/>
        <dbReference type="Rhea" id="RHEA-COMP:10131"/>
        <dbReference type="Rhea" id="RHEA-COMP:11032"/>
        <dbReference type="ChEBI" id="CHEBI:29950"/>
        <dbReference type="ChEBI" id="CHEBI:57287"/>
        <dbReference type="ChEBI" id="CHEBI:57379"/>
        <dbReference type="ChEBI" id="CHEBI:74151"/>
        <dbReference type="EC" id="2.3.1.225"/>
    </reaction>
    <physiologicalReaction direction="left-to-right" evidence="21 22 23">
        <dbReference type="Rhea" id="RHEA:36684"/>
    </physiologicalReaction>
</comment>
<comment type="catalytic activity">
    <reaction evidence="24">
        <text>L-cysteinyl-[protein] + tetradecanoyl-CoA = S-tetradecanoyl-L-cysteinyl-[protein] + CoA</text>
        <dbReference type="Rhea" id="RHEA:59736"/>
        <dbReference type="Rhea" id="RHEA-COMP:10131"/>
        <dbReference type="Rhea" id="RHEA-COMP:15433"/>
        <dbReference type="ChEBI" id="CHEBI:29950"/>
        <dbReference type="ChEBI" id="CHEBI:57287"/>
        <dbReference type="ChEBI" id="CHEBI:57385"/>
        <dbReference type="ChEBI" id="CHEBI:143199"/>
    </reaction>
    <physiologicalReaction direction="left-to-right" evidence="24">
        <dbReference type="Rhea" id="RHEA:59737"/>
    </physiologicalReaction>
</comment>
<comment type="catalytic activity">
    <reaction evidence="24">
        <text>L-cysteinyl-[protein] + octadecanoyl-CoA = S-octadecanoyl-L-cysteinyl-[protein] + CoA</text>
        <dbReference type="Rhea" id="RHEA:59740"/>
        <dbReference type="Rhea" id="RHEA-COMP:10131"/>
        <dbReference type="Rhea" id="RHEA-COMP:15434"/>
        <dbReference type="ChEBI" id="CHEBI:29950"/>
        <dbReference type="ChEBI" id="CHEBI:57287"/>
        <dbReference type="ChEBI" id="CHEBI:57394"/>
        <dbReference type="ChEBI" id="CHEBI:143200"/>
    </reaction>
    <physiologicalReaction direction="left-to-right" evidence="24">
        <dbReference type="Rhea" id="RHEA:59741"/>
    </physiologicalReaction>
</comment>
<comment type="subunit">
    <text evidence="1 9 10 11 12 14">Interacts (via ANK repeats) with numerous proteins (via the consensus sequence motif [VIAP]-[VIT]-x-x-Q-P) (By similarity). Interacts (via ANK repeats) with CLIP3 (PubMed:26198635). Interacts (via ANK repeats) with HTT (PubMed:26198635). Interacts (via ANK repeats) with DNAJC5 (via C-terminus) (PubMed:25253725, PubMed:26198635). Interacts (via ANK repeats) with MAP6 (PubMed:26198635). Interacts (via ANK repeats) with SNAP23 (PubMed:26198635). Interacts (via ANK repeats) with SNAP25 (PubMed:25253725, PubMed:26198635). Interacts (via ANK repeats) with EVL (By similarity). Interacts with SPRED1 and SPRED3 (PubMed:24705354). Interacts with GPM6A and OPTN (By similarity). May interact (via ANK repeats) with SPRED2 (PubMed:28882895). May interact with NTRK1; may regulate its localization and function (PubMed:26232532).</text>
</comment>
<comment type="subcellular location">
    <subcellularLocation>
        <location evidence="7 10">Golgi apparatus membrane</location>
        <topology evidence="2">Multi-pass membrane protein</topology>
    </subcellularLocation>
    <subcellularLocation>
        <location evidence="1">Cytoplasmic vesicle membrane</location>
        <topology evidence="2">Multi-pass membrane protein</topology>
    </subcellularLocation>
    <subcellularLocation>
        <location evidence="1">Presynaptic cell membrane</location>
        <topology evidence="2">Multi-pass membrane protein</topology>
    </subcellularLocation>
    <text evidence="1">Low extracellular Mg(2+) induces increase in Golgi and in post-Golgi membrane vesicles.</text>
</comment>
<comment type="alternative products">
    <event type="alternative splicing"/>
    <isoform>
        <id>Q80TN5-1</id>
        <name>1</name>
        <sequence type="displayed"/>
    </isoform>
    <isoform>
        <id>Q80TN5-2</id>
        <name>2</name>
        <sequence type="described" ref="VSP_010026 VSP_010027"/>
    </isoform>
</comment>
<comment type="tissue specificity">
    <text evidence="4">Expressed in liver, testis, kidney, heart, pancreas and brain. Highest expression was seen in the brain. Localized predominantly in the perinuclear regions of neurons from the cortex, striatum and hippocampus. Colocalized with HTT in the medium spiny neurons of the striatum and the spiny neurons that project into the globus pallidus.</text>
</comment>
<comment type="developmental stage">
    <text evidence="12">Highly expressed in neurons during their differentiation.</text>
</comment>
<comment type="induction">
    <text evidence="8">Up-regulated by low extracellular Mg(2+).</text>
</comment>
<comment type="domain">
    <text evidence="1">The DHHC domain is required for palmitoyltransferase activity.</text>
</comment>
<comment type="PTM">
    <text evidence="1">Autopalmitoylated. Autopalmitoylation has a regulatory role in ZDHHC17-mediated Mg(2+) transport.</text>
</comment>
<comment type="similarity">
    <text evidence="20">Belongs to the DHHC palmitoyltransferase family. AKR/ZDHHC17 subfamily.</text>
</comment>
<comment type="sequence caution" evidence="20">
    <conflict type="miscellaneous discrepancy">
        <sequence resource="EMBL-CDS" id="AAH58772"/>
    </conflict>
    <text>Contaminating sequence. Potential poly-A sequence.</text>
</comment>
<comment type="sequence caution" evidence="20">
    <conflict type="erroneous initiation">
        <sequence resource="EMBL-CDS" id="BAC30090"/>
    </conflict>
    <text>Truncated N-terminus.</text>
</comment>
<comment type="sequence caution" evidence="20">
    <conflict type="erroneous initiation">
        <sequence resource="EMBL-CDS" id="BAC30097"/>
    </conflict>
    <text>Truncated N-terminus.</text>
</comment>
<comment type="sequence caution" evidence="20">
    <conflict type="erroneous initiation">
        <sequence resource="EMBL-CDS" id="BAC32912"/>
    </conflict>
    <text>Truncated N-terminus.</text>
</comment>
<comment type="sequence caution" evidence="20">
    <conflict type="erroneous initiation">
        <sequence resource="EMBL-CDS" id="BAC65688"/>
    </conflict>
    <text>Truncated N-terminus.</text>
</comment>